<evidence type="ECO:0000250" key="1">
    <source>
        <dbReference type="UniProtKB" id="Q8TCG2"/>
    </source>
</evidence>
<evidence type="ECO:0000250" key="2">
    <source>
        <dbReference type="UniProtKB" id="Q9BTU6"/>
    </source>
</evidence>
<evidence type="ECO:0000255" key="3">
    <source>
        <dbReference type="PROSITE-ProRule" id="PRU00269"/>
    </source>
</evidence>
<evidence type="ECO:0000256" key="4">
    <source>
        <dbReference type="SAM" id="MobiDB-lite"/>
    </source>
</evidence>
<evidence type="ECO:0000305" key="5"/>
<gene>
    <name type="primary">PI4K2B</name>
    <name type="ORF">RCJMB04_25j21</name>
</gene>
<keyword id="KW-0067">ATP-binding</keyword>
<keyword id="KW-1003">Cell membrane</keyword>
<keyword id="KW-0963">Cytoplasm</keyword>
<keyword id="KW-0256">Endoplasmic reticulum</keyword>
<keyword id="KW-0967">Endosome</keyword>
<keyword id="KW-0333">Golgi apparatus</keyword>
<keyword id="KW-0418">Kinase</keyword>
<keyword id="KW-0443">Lipid metabolism</keyword>
<keyword id="KW-0472">Membrane</keyword>
<keyword id="KW-0547">Nucleotide-binding</keyword>
<keyword id="KW-1185">Reference proteome</keyword>
<keyword id="KW-0808">Transferase</keyword>
<feature type="chain" id="PRO_0000285167" description="Phosphatidylinositol 4-kinase type 2-beta">
    <location>
        <begin position="1"/>
        <end position="479"/>
    </location>
</feature>
<feature type="domain" description="PI3K/PI4K catalytic" evidence="3">
    <location>
        <begin position="118"/>
        <end position="449"/>
    </location>
</feature>
<feature type="region of interest" description="Disordered" evidence="4">
    <location>
        <begin position="1"/>
        <end position="91"/>
    </location>
</feature>
<feature type="region of interest" description="G-loop" evidence="3">
    <location>
        <begin position="124"/>
        <end position="130"/>
    </location>
</feature>
<feature type="region of interest" description="Important for substrate binding" evidence="2">
    <location>
        <begin position="151"/>
        <end position="153"/>
    </location>
</feature>
<feature type="region of interest" description="Important for interaction with membranes" evidence="2">
    <location>
        <begin position="159"/>
        <end position="172"/>
    </location>
</feature>
<feature type="region of interest" description="Important for interaction with membranes" evidence="2">
    <location>
        <begin position="262"/>
        <end position="270"/>
    </location>
</feature>
<feature type="region of interest" description="Catalytic loop" evidence="3">
    <location>
        <begin position="299"/>
        <end position="307"/>
    </location>
</feature>
<feature type="region of interest" description="Activation loop" evidence="3">
    <location>
        <begin position="340"/>
        <end position="360"/>
    </location>
</feature>
<feature type="region of interest" description="Important for interaction with membranes" evidence="2">
    <location>
        <begin position="355"/>
        <end position="364"/>
    </location>
</feature>
<feature type="compositionally biased region" description="Acidic residues" evidence="4">
    <location>
        <begin position="1"/>
        <end position="10"/>
    </location>
</feature>
<feature type="compositionally biased region" description="Low complexity" evidence="4">
    <location>
        <begin position="18"/>
        <end position="34"/>
    </location>
</feature>
<feature type="compositionally biased region" description="Acidic residues" evidence="4">
    <location>
        <begin position="42"/>
        <end position="62"/>
    </location>
</feature>
<feature type="binding site" evidence="1">
    <location>
        <position position="131"/>
    </location>
    <ligand>
        <name>ATP</name>
        <dbReference type="ChEBI" id="CHEBI:30616"/>
    </ligand>
</feature>
<feature type="binding site" evidence="1">
    <location>
        <position position="146"/>
    </location>
    <ligand>
        <name>ATP</name>
        <dbReference type="ChEBI" id="CHEBI:30616"/>
    </ligand>
</feature>
<feature type="binding site" evidence="1">
    <location>
        <begin position="255"/>
        <end position="258"/>
    </location>
    <ligand>
        <name>ATP</name>
        <dbReference type="ChEBI" id="CHEBI:30616"/>
    </ligand>
</feature>
<feature type="binding site" evidence="1">
    <location>
        <begin position="269"/>
        <end position="270"/>
    </location>
    <ligand>
        <name>ATP</name>
        <dbReference type="ChEBI" id="CHEBI:30616"/>
    </ligand>
</feature>
<feature type="binding site" evidence="1">
    <location>
        <position position="342"/>
    </location>
    <ligand>
        <name>ATP</name>
        <dbReference type="ChEBI" id="CHEBI:30616"/>
    </ligand>
</feature>
<comment type="function">
    <text evidence="1">Contributes to the overall PI4-kinase activity of the cell. This contribution may be especially significant in plasma membrane, endosomal and Golgi compartments. The phosphorylation of phosphatidylinositol (PI) to PI4P is the first committed step in the generation of phosphatidylinositol 4,5-bisphosphate (PIP2), a precursor of the second messenger inositol 1,4,5-trisphosphate (InsP3).</text>
</comment>
<comment type="catalytic activity">
    <reaction evidence="1">
        <text>a 1,2-diacyl-sn-glycero-3-phospho-(1D-myo-inositol) + ATP = a 1,2-diacyl-sn-glycero-3-phospho-(1D-myo-inositol 4-phosphate) + ADP + H(+)</text>
        <dbReference type="Rhea" id="RHEA:19877"/>
        <dbReference type="ChEBI" id="CHEBI:15378"/>
        <dbReference type="ChEBI" id="CHEBI:30616"/>
        <dbReference type="ChEBI" id="CHEBI:57880"/>
        <dbReference type="ChEBI" id="CHEBI:58178"/>
        <dbReference type="ChEBI" id="CHEBI:456216"/>
        <dbReference type="EC" id="2.7.1.67"/>
    </reaction>
    <physiologicalReaction direction="left-to-right" evidence="1">
        <dbReference type="Rhea" id="RHEA:19878"/>
    </physiologicalReaction>
</comment>
<comment type="subcellular location">
    <subcellularLocation>
        <location evidence="1">Cytoplasm</location>
        <location evidence="1">Cytosol</location>
    </subcellularLocation>
    <subcellularLocation>
        <location evidence="1">Golgi apparatus membrane</location>
        <topology evidence="1">Peripheral membrane protein</topology>
    </subcellularLocation>
    <subcellularLocation>
        <location evidence="1">Endoplasmic reticulum membrane</location>
    </subcellularLocation>
    <subcellularLocation>
        <location evidence="1">Cell membrane</location>
    </subcellularLocation>
    <subcellularLocation>
        <location evidence="1">Early endosome membrane</location>
    </subcellularLocation>
</comment>
<comment type="similarity">
    <text evidence="5">Belongs to the PI3/PI4-kinase family. Type II PI4K subfamily.</text>
</comment>
<sequence length="479" mass="53922">MESGSEEPDEQLLLLSEPALHAGPPAGRAAPGGAVRLRGEPGLEEEEEGEEDSGPEGDGEEEPLLRASGRGRRAGAARDKEPRVGAGHTGHAIDMNTFLDDPEFAEIITRAEQVIECGVLPERISQGSSGSYFVKDCKGKTIGVFKPKSEEPYGHLNPKWTKYFHKICCPCCFGRGCLVPNQGYLSEAGAYLVDDKLGLGVVPKTKVVWLVSETFNYSAIDRAKSRGKKYALEKVPKVAKKFNRIGLPPKVGSFQLFVEGYKEADYWLRKFETDPLPENTRKEFQSQFERLVILDYVIRNTDRGNDNWLVRYEKQDDGLNLSDKDIQWTVTEESTIKIAAIDNGLAFPFKHPDEWRAYPFHWAWLSQAQVPFSQETRDLVLPRISDMNFVQDLCEDLHELFKTDKGFDKATFENQMSVMRGQILNLTQALKDGKSPIQLVQMPRVIVERSSTGSQGRIVHLSNAFTQTFHSRKPFFSSW</sequence>
<accession>Q5ZIK0</accession>
<protein>
    <recommendedName>
        <fullName>Phosphatidylinositol 4-kinase type 2-beta</fullName>
        <ecNumber evidence="1">2.7.1.67</ecNumber>
    </recommendedName>
    <alternativeName>
        <fullName>Phosphatidylinositol 4-kinase type II-beta</fullName>
    </alternativeName>
</protein>
<proteinExistence type="evidence at transcript level"/>
<reference key="1">
    <citation type="journal article" date="2005" name="Genome Biol.">
        <title>Full-length cDNAs from chicken bursal lymphocytes to facilitate gene function analysis.</title>
        <authorList>
            <person name="Caldwell R.B."/>
            <person name="Kierzek A.M."/>
            <person name="Arakawa H."/>
            <person name="Bezzubov Y."/>
            <person name="Zaim J."/>
            <person name="Fiedler P."/>
            <person name="Kutter S."/>
            <person name="Blagodatski A."/>
            <person name="Kostovska D."/>
            <person name="Koter M."/>
            <person name="Plachy J."/>
            <person name="Carninci P."/>
            <person name="Hayashizaki Y."/>
            <person name="Buerstedde J.-M."/>
        </authorList>
    </citation>
    <scope>NUCLEOTIDE SEQUENCE [LARGE SCALE MRNA]</scope>
    <source>
        <strain>CB</strain>
        <tissue>Bursa of Fabricius</tissue>
    </source>
</reference>
<dbReference type="EC" id="2.7.1.67" evidence="1"/>
<dbReference type="EMBL" id="AJ720784">
    <property type="protein sequence ID" value="CAG32443.1"/>
    <property type="molecule type" value="mRNA"/>
</dbReference>
<dbReference type="RefSeq" id="NP_001026328.1">
    <property type="nucleotide sequence ID" value="NM_001031157.1"/>
</dbReference>
<dbReference type="SMR" id="Q5ZIK0"/>
<dbReference type="FunCoup" id="Q5ZIK0">
    <property type="interactions" value="1470"/>
</dbReference>
<dbReference type="STRING" id="9031.ENSGALP00000053946"/>
<dbReference type="PaxDb" id="9031-ENSGALP00000023196"/>
<dbReference type="GeneID" id="422807"/>
<dbReference type="KEGG" id="gga:422807"/>
<dbReference type="CTD" id="55300"/>
<dbReference type="VEuPathDB" id="HostDB:geneid_422807"/>
<dbReference type="eggNOG" id="KOG2381">
    <property type="taxonomic scope" value="Eukaryota"/>
</dbReference>
<dbReference type="InParanoid" id="Q5ZIK0"/>
<dbReference type="OrthoDB" id="3349449at2759"/>
<dbReference type="PhylomeDB" id="Q5ZIK0"/>
<dbReference type="PRO" id="PR:Q5ZIK0"/>
<dbReference type="Proteomes" id="UP000000539">
    <property type="component" value="Unassembled WGS sequence"/>
</dbReference>
<dbReference type="GO" id="GO:0005829">
    <property type="term" value="C:cytosol"/>
    <property type="evidence" value="ECO:0000250"/>
    <property type="project" value="UniProtKB"/>
</dbReference>
<dbReference type="GO" id="GO:0031901">
    <property type="term" value="C:early endosome membrane"/>
    <property type="evidence" value="ECO:0007669"/>
    <property type="project" value="UniProtKB-SubCell"/>
</dbReference>
<dbReference type="GO" id="GO:0005789">
    <property type="term" value="C:endoplasmic reticulum membrane"/>
    <property type="evidence" value="ECO:0000250"/>
    <property type="project" value="UniProtKB"/>
</dbReference>
<dbReference type="GO" id="GO:0005768">
    <property type="term" value="C:endosome"/>
    <property type="evidence" value="ECO:0000318"/>
    <property type="project" value="GO_Central"/>
</dbReference>
<dbReference type="GO" id="GO:0000139">
    <property type="term" value="C:Golgi membrane"/>
    <property type="evidence" value="ECO:0000250"/>
    <property type="project" value="UniProtKB"/>
</dbReference>
<dbReference type="GO" id="GO:0005886">
    <property type="term" value="C:plasma membrane"/>
    <property type="evidence" value="ECO:0000250"/>
    <property type="project" value="UniProtKB"/>
</dbReference>
<dbReference type="GO" id="GO:0005802">
    <property type="term" value="C:trans-Golgi network"/>
    <property type="evidence" value="ECO:0000318"/>
    <property type="project" value="GO_Central"/>
</dbReference>
<dbReference type="GO" id="GO:0004430">
    <property type="term" value="F:1-phosphatidylinositol 4-kinase activity"/>
    <property type="evidence" value="ECO:0000250"/>
    <property type="project" value="UniProtKB"/>
</dbReference>
<dbReference type="GO" id="GO:0005524">
    <property type="term" value="F:ATP binding"/>
    <property type="evidence" value="ECO:0007669"/>
    <property type="project" value="UniProtKB-KW"/>
</dbReference>
<dbReference type="GO" id="GO:0007032">
    <property type="term" value="P:endosome organization"/>
    <property type="evidence" value="ECO:0000318"/>
    <property type="project" value="GO_Central"/>
</dbReference>
<dbReference type="GO" id="GO:0007030">
    <property type="term" value="P:Golgi organization"/>
    <property type="evidence" value="ECO:0000318"/>
    <property type="project" value="GO_Central"/>
</dbReference>
<dbReference type="GO" id="GO:0046854">
    <property type="term" value="P:phosphatidylinositol phosphate biosynthetic process"/>
    <property type="evidence" value="ECO:0000250"/>
    <property type="project" value="UniProtKB"/>
</dbReference>
<dbReference type="InterPro" id="IPR039756">
    <property type="entry name" value="Lsb6/PI4K2"/>
</dbReference>
<dbReference type="InterPro" id="IPR000403">
    <property type="entry name" value="PI3/4_kinase_cat_dom"/>
</dbReference>
<dbReference type="PANTHER" id="PTHR12865:SF6">
    <property type="entry name" value="PHOSPHATIDYLINOSITOL 4-KINASE TYPE 2-BETA"/>
    <property type="match status" value="1"/>
</dbReference>
<dbReference type="PANTHER" id="PTHR12865">
    <property type="entry name" value="PHOSPHATIDYLINOSITOL 4-KINASE TYPE-II"/>
    <property type="match status" value="1"/>
</dbReference>
<dbReference type="Pfam" id="PF00454">
    <property type="entry name" value="PI3_PI4_kinase"/>
    <property type="match status" value="1"/>
</dbReference>
<dbReference type="PROSITE" id="PS50290">
    <property type="entry name" value="PI3_4_KINASE_3"/>
    <property type="match status" value="1"/>
</dbReference>
<name>P4K2B_CHICK</name>
<organism>
    <name type="scientific">Gallus gallus</name>
    <name type="common">Chicken</name>
    <dbReference type="NCBI Taxonomy" id="9031"/>
    <lineage>
        <taxon>Eukaryota</taxon>
        <taxon>Metazoa</taxon>
        <taxon>Chordata</taxon>
        <taxon>Craniata</taxon>
        <taxon>Vertebrata</taxon>
        <taxon>Euteleostomi</taxon>
        <taxon>Archelosauria</taxon>
        <taxon>Archosauria</taxon>
        <taxon>Dinosauria</taxon>
        <taxon>Saurischia</taxon>
        <taxon>Theropoda</taxon>
        <taxon>Coelurosauria</taxon>
        <taxon>Aves</taxon>
        <taxon>Neognathae</taxon>
        <taxon>Galloanserae</taxon>
        <taxon>Galliformes</taxon>
        <taxon>Phasianidae</taxon>
        <taxon>Phasianinae</taxon>
        <taxon>Gallus</taxon>
    </lineage>
</organism>